<reference evidence="3" key="1">
    <citation type="journal article" date="2021" name="Rapid Commun. Mass Spectrom.">
        <title>Manual mass spectrometry de novo sequencing of the anionic host defense peptides of the Cuban Treefrog Osteopilus septentrionalis.</title>
        <authorList>
            <person name="Samgina T.Y."/>
            <person name="Tolpina M.D."/>
            <person name="Surin A.K."/>
            <person name="Kovalev S.V."/>
            <person name="Bosch R.A."/>
            <person name="Alonso I.P."/>
            <person name="Garcia F.A."/>
            <person name="Gonzalez Lopez L.J."/>
            <person name="Lebedev A.T."/>
        </authorList>
    </citation>
    <scope>PROTEIN SEQUENCE</scope>
    <scope>MASS SPECTROMETRY</scope>
</reference>
<sequence length="17" mass="1599">SDAVADGVHAISGVVDS</sequence>
<organism>
    <name type="scientific">Osteopilus septentrionalis</name>
    <name type="common">Cuban treefrog</name>
    <dbReference type="NCBI Taxonomy" id="317373"/>
    <lineage>
        <taxon>Eukaryota</taxon>
        <taxon>Metazoa</taxon>
        <taxon>Chordata</taxon>
        <taxon>Craniata</taxon>
        <taxon>Vertebrata</taxon>
        <taxon>Euteleostomi</taxon>
        <taxon>Amphibia</taxon>
        <taxon>Batrachia</taxon>
        <taxon>Anura</taxon>
        <taxon>Neobatrachia</taxon>
        <taxon>Hyloidea</taxon>
        <taxon>Hylidae</taxon>
        <taxon>Hylinae</taxon>
        <taxon>Lophiohylini</taxon>
        <taxon>Osteopilus</taxon>
    </lineage>
</organism>
<dbReference type="GO" id="GO:0005576">
    <property type="term" value="C:extracellular region"/>
    <property type="evidence" value="ECO:0007669"/>
    <property type="project" value="UniProtKB-SubCell"/>
</dbReference>
<feature type="chain" id="PRO_0000453937" description="Septenin 1c">
    <location>
        <begin position="1"/>
        <end position="17"/>
    </location>
</feature>
<feature type="unsure residue" description="L or I" evidence="1">
    <location>
        <position position="11"/>
    </location>
</feature>
<comment type="function">
    <text evidence="2">May act as an antimicrobial peptide.</text>
</comment>
<comment type="subcellular location">
    <subcellularLocation>
        <location evidence="1">Secreted</location>
    </subcellularLocation>
</comment>
<comment type="tissue specificity">
    <text evidence="4">Expressed in skin glands.</text>
</comment>
<comment type="mass spectrometry" mass="1597.782" method="Electrospray" evidence="1"/>
<comment type="similarity">
    <text evidence="3">Belongs to the Frog skin active peptide (FSAP) family. Septenin subfamily.</text>
</comment>
<protein>
    <recommendedName>
        <fullName evidence="2">Septenin 1c</fullName>
    </recommendedName>
</protein>
<name>SEP1C_OSTSE</name>
<proteinExistence type="evidence at protein level"/>
<accession>C0HLW4</accession>
<evidence type="ECO:0000269" key="1">
    <source>
    </source>
</evidence>
<evidence type="ECO:0000303" key="2">
    <source>
    </source>
</evidence>
<evidence type="ECO:0000305" key="3"/>
<evidence type="ECO:0000305" key="4">
    <source>
    </source>
</evidence>
<keyword id="KW-0903">Direct protein sequencing</keyword>
<keyword id="KW-0964">Secreted</keyword>